<comment type="function">
    <text evidence="4 5">Receptor for CLEC2D/OCIL. Ligand-binding contributes to inhibition of cytotoxic natural killer (NK) cells. May mediate MHC class I-independent 'missing-self' recognition of allografts, tumor cells and virus-infected cells.</text>
</comment>
<comment type="subunit">
    <text evidence="1 4">Homodimer; disulfide-linked. Interacts with tyrosine kinase LCK. Binds PTPN6/SHP-1 in a phosphorylation-dependent manner.</text>
</comment>
<comment type="subcellular location">
    <subcellularLocation>
        <location evidence="2">Membrane</location>
        <topology evidence="2">Single-pass type II membrane protein</topology>
    </subcellularLocation>
</comment>
<comment type="tissue specificity">
    <text evidence="4">Expressed in a subset of natural killer cells.</text>
</comment>
<comment type="domain">
    <text evidence="1">Contains 1 copy of a cytoplasmic motif that is referred to as the immunoreceptor tyrosine-based inhibitor motif (ITIM). The phosphorylated ITIM motif can bind the SH2 domain of several SH2-containing phosphatases leading to down-regulation of cell activation (By similarity).</text>
</comment>
<comment type="polymorphism">
    <text evidence="5">Alleles A, B and C are highly divergent forms of Klrb1b. Alleles A and B differ in their susceptibility to evasion of innate immunity by the rat cytomegalovirus (CMV). In contrast to allele B, allele A shows very low binding of a viral protein mimicking the Klrb1b ligand CLEC2D as well as low susceptibility to this MHC class I-independent viral evasion mechanism.</text>
</comment>
<proteinExistence type="evidence at protein level"/>
<accession>A4KWA1</accession>
<accession>Q62983</accession>
<organism>
    <name type="scientific">Rattus norvegicus</name>
    <name type="common">Rat</name>
    <dbReference type="NCBI Taxonomy" id="10116"/>
    <lineage>
        <taxon>Eukaryota</taxon>
        <taxon>Metazoa</taxon>
        <taxon>Chordata</taxon>
        <taxon>Craniata</taxon>
        <taxon>Vertebrata</taxon>
        <taxon>Euteleostomi</taxon>
        <taxon>Mammalia</taxon>
        <taxon>Eutheria</taxon>
        <taxon>Euarchontoglires</taxon>
        <taxon>Glires</taxon>
        <taxon>Rodentia</taxon>
        <taxon>Myomorpha</taxon>
        <taxon>Muroidea</taxon>
        <taxon>Muridae</taxon>
        <taxon>Murinae</taxon>
        <taxon>Rattus</taxon>
    </lineage>
</organism>
<feature type="chain" id="PRO_0000292984" description="Killer cell lectin-like receptor subfamily B member 1B allele A">
    <location>
        <begin position="1"/>
        <end position="223"/>
    </location>
</feature>
<feature type="topological domain" description="Cytoplasmic" evidence="2">
    <location>
        <begin position="1"/>
        <end position="45"/>
    </location>
</feature>
<feature type="transmembrane region" description="Helical; Signal-anchor for type II membrane protein" evidence="2">
    <location>
        <begin position="46"/>
        <end position="66"/>
    </location>
</feature>
<feature type="topological domain" description="Extracellular" evidence="2">
    <location>
        <begin position="67"/>
        <end position="223"/>
    </location>
</feature>
<feature type="domain" description="C-type lectin" evidence="3">
    <location>
        <begin position="101"/>
        <end position="211"/>
    </location>
</feature>
<feature type="short sequence motif" description="ITIM motif">
    <location>
        <begin position="5"/>
        <end position="10"/>
    </location>
</feature>
<feature type="short sequence motif" description="LCK-binding motif" evidence="1">
    <location>
        <begin position="31"/>
        <end position="34"/>
    </location>
</feature>
<feature type="disulfide bond" evidence="3">
    <location>
        <begin position="122"/>
        <end position="210"/>
    </location>
</feature>
<feature type="disulfide bond" evidence="3">
    <location>
        <begin position="189"/>
        <end position="202"/>
    </location>
</feature>
<feature type="sequence conflict" description="In Ref. 1; AAB01986." evidence="6" ref="1">
    <original>DS</original>
    <variation>EV</variation>
    <location>
        <begin position="87"/>
        <end position="88"/>
    </location>
</feature>
<feature type="sequence conflict" description="In Ref. 1; AAB01986." evidence="6" ref="1">
    <original>H</original>
    <variation>L</variation>
    <location>
        <position position="101"/>
    </location>
</feature>
<feature type="sequence conflict" description="In Ref. 1; AAB01986." evidence="6" ref="1">
    <original>S</original>
    <variation>I</variation>
    <location>
        <position position="149"/>
    </location>
</feature>
<feature type="strand" evidence="11">
    <location>
        <begin position="99"/>
        <end position="101"/>
    </location>
</feature>
<feature type="strand" evidence="11">
    <location>
        <begin position="104"/>
        <end position="108"/>
    </location>
</feature>
<feature type="helix" evidence="11">
    <location>
        <begin position="115"/>
        <end position="124"/>
    </location>
</feature>
<feature type="strand" evidence="12">
    <location>
        <begin position="128"/>
        <end position="130"/>
    </location>
</feature>
<feature type="helix" evidence="11">
    <location>
        <begin position="135"/>
        <end position="144"/>
    </location>
</feature>
<feature type="turn" evidence="11">
    <location>
        <begin position="145"/>
        <end position="148"/>
    </location>
</feature>
<feature type="strand" evidence="11">
    <location>
        <begin position="152"/>
        <end position="158"/>
    </location>
</feature>
<feature type="helix" evidence="11">
    <location>
        <begin position="160"/>
        <end position="162"/>
    </location>
</feature>
<feature type="strand" evidence="11">
    <location>
        <begin position="164"/>
        <end position="167"/>
    </location>
</feature>
<feature type="turn" evidence="11">
    <location>
        <begin position="175"/>
        <end position="177"/>
    </location>
</feature>
<feature type="strand" evidence="11">
    <location>
        <begin position="188"/>
        <end position="192"/>
    </location>
</feature>
<feature type="strand" evidence="11">
    <location>
        <begin position="198"/>
        <end position="200"/>
    </location>
</feature>
<feature type="strand" evidence="12">
    <location>
        <begin position="202"/>
        <end position="204"/>
    </location>
</feature>
<feature type="strand" evidence="11">
    <location>
        <begin position="208"/>
        <end position="211"/>
    </location>
</feature>
<gene>
    <name evidence="10" type="primary">Klrb1b</name>
    <name evidence="7" type="synonym">Nkrp1b</name>
</gene>
<dbReference type="EMBL" id="EF100682">
    <property type="protein sequence ID" value="ABO15822.1"/>
    <property type="molecule type" value="mRNA"/>
</dbReference>
<dbReference type="EMBL" id="EF100684">
    <property type="protein sequence ID" value="ABO15824.1"/>
    <property type="molecule type" value="mRNA"/>
</dbReference>
<dbReference type="EMBL" id="U56936">
    <property type="protein sequence ID" value="AAB01986.1"/>
    <property type="molecule type" value="mRNA"/>
</dbReference>
<dbReference type="RefSeq" id="NP_775414.2">
    <property type="nucleotide sequence ID" value="NM_173292.3"/>
</dbReference>
<dbReference type="PDB" id="5J2S">
    <property type="method" value="X-ray"/>
    <property type="resolution" value="2.00 A"/>
    <property type="chains" value="A/B=78-223"/>
</dbReference>
<dbReference type="PDB" id="7ODU">
    <property type="method" value="X-ray"/>
    <property type="resolution" value="3.00 A"/>
    <property type="chains" value="C=78-223"/>
</dbReference>
<dbReference type="PDBsum" id="5J2S"/>
<dbReference type="PDBsum" id="7ODU"/>
<dbReference type="SMR" id="A4KWA1"/>
<dbReference type="FunCoup" id="A4KWA1">
    <property type="interactions" value="32"/>
</dbReference>
<dbReference type="PhosphoSitePlus" id="A4KWA1"/>
<dbReference type="PaxDb" id="10116-ENSRNOP00000009904"/>
<dbReference type="Ensembl" id="ENSRNOT00000111200.1">
    <property type="protein sequence ID" value="ENSRNOP00000095158.1"/>
    <property type="gene ID" value="ENSRNOG00000007310.7"/>
</dbReference>
<dbReference type="GeneID" id="25192"/>
<dbReference type="KEGG" id="rno:25192"/>
<dbReference type="AGR" id="RGD:2975"/>
<dbReference type="CTD" id="80782"/>
<dbReference type="RGD" id="2975">
    <property type="gene designation" value="Klrb1b"/>
</dbReference>
<dbReference type="eggNOG" id="KOG4297">
    <property type="taxonomic scope" value="Eukaryota"/>
</dbReference>
<dbReference type="GeneTree" id="ENSGT00940000154685"/>
<dbReference type="HOGENOM" id="CLU_049894_8_2_1"/>
<dbReference type="InParanoid" id="A4KWA1"/>
<dbReference type="OrthoDB" id="8950604at2759"/>
<dbReference type="Proteomes" id="UP000002494">
    <property type="component" value="Chromosome 4"/>
</dbReference>
<dbReference type="Bgee" id="ENSRNOG00000007310">
    <property type="expression patterns" value="Expressed in spleen and 16 other cell types or tissues"/>
</dbReference>
<dbReference type="ExpressionAtlas" id="A4KWA1">
    <property type="expression patterns" value="baseline and differential"/>
</dbReference>
<dbReference type="GO" id="GO:0009986">
    <property type="term" value="C:cell surface"/>
    <property type="evidence" value="ECO:0000266"/>
    <property type="project" value="RGD"/>
</dbReference>
<dbReference type="GO" id="GO:0009897">
    <property type="term" value="C:external side of plasma membrane"/>
    <property type="evidence" value="ECO:0000266"/>
    <property type="project" value="RGD"/>
</dbReference>
<dbReference type="GO" id="GO:0005886">
    <property type="term" value="C:plasma membrane"/>
    <property type="evidence" value="ECO:0000266"/>
    <property type="project" value="RGD"/>
</dbReference>
<dbReference type="GO" id="GO:0030246">
    <property type="term" value="F:carbohydrate binding"/>
    <property type="evidence" value="ECO:0007669"/>
    <property type="project" value="UniProtKB-KW"/>
</dbReference>
<dbReference type="GO" id="GO:0042802">
    <property type="term" value="F:identical protein binding"/>
    <property type="evidence" value="ECO:0000266"/>
    <property type="project" value="RGD"/>
</dbReference>
<dbReference type="GO" id="GO:0042803">
    <property type="term" value="F:protein homodimerization activity"/>
    <property type="evidence" value="ECO:0000266"/>
    <property type="project" value="RGD"/>
</dbReference>
<dbReference type="GO" id="GO:0038023">
    <property type="term" value="F:signaling receptor activity"/>
    <property type="evidence" value="ECO:0000266"/>
    <property type="project" value="RGD"/>
</dbReference>
<dbReference type="GO" id="GO:0030101">
    <property type="term" value="P:natural killer cell activation"/>
    <property type="evidence" value="ECO:0000266"/>
    <property type="project" value="RGD"/>
</dbReference>
<dbReference type="GO" id="GO:0045954">
    <property type="term" value="P:positive regulation of natural killer cell mediated cytotoxicity"/>
    <property type="evidence" value="ECO:0000266"/>
    <property type="project" value="RGD"/>
</dbReference>
<dbReference type="GO" id="GO:0042269">
    <property type="term" value="P:regulation of natural killer cell mediated cytotoxicity"/>
    <property type="evidence" value="ECO:0000318"/>
    <property type="project" value="GO_Central"/>
</dbReference>
<dbReference type="CDD" id="cd03593">
    <property type="entry name" value="CLECT_NK_receptors_like"/>
    <property type="match status" value="1"/>
</dbReference>
<dbReference type="Gene3D" id="3.10.100.10">
    <property type="entry name" value="Mannose-Binding Protein A, subunit A"/>
    <property type="match status" value="1"/>
</dbReference>
<dbReference type="InterPro" id="IPR001304">
    <property type="entry name" value="C-type_lectin-like"/>
</dbReference>
<dbReference type="InterPro" id="IPR016186">
    <property type="entry name" value="C-type_lectin-like/link_sf"/>
</dbReference>
<dbReference type="InterPro" id="IPR016187">
    <property type="entry name" value="CTDL_fold"/>
</dbReference>
<dbReference type="InterPro" id="IPR051527">
    <property type="entry name" value="KLR_subfamily_B"/>
</dbReference>
<dbReference type="InterPro" id="IPR033992">
    <property type="entry name" value="NKR-like_CTLD"/>
</dbReference>
<dbReference type="PANTHER" id="PTHR46784">
    <property type="entry name" value="KILLER CELL LECTIN-LIKE RECEPTOR SUBFAMILY B MEMBER 1"/>
    <property type="match status" value="1"/>
</dbReference>
<dbReference type="PANTHER" id="PTHR46784:SF1">
    <property type="entry name" value="KILLER CELL LECTIN-LIKE RECEPTOR SUBFAMILY B MEMBER 1"/>
    <property type="match status" value="1"/>
</dbReference>
<dbReference type="Pfam" id="PF00059">
    <property type="entry name" value="Lectin_C"/>
    <property type="match status" value="1"/>
</dbReference>
<dbReference type="SMART" id="SM00034">
    <property type="entry name" value="CLECT"/>
    <property type="match status" value="1"/>
</dbReference>
<dbReference type="SUPFAM" id="SSF56436">
    <property type="entry name" value="C-type lectin-like"/>
    <property type="match status" value="1"/>
</dbReference>
<dbReference type="PROSITE" id="PS50041">
    <property type="entry name" value="C_TYPE_LECTIN_2"/>
    <property type="match status" value="1"/>
</dbReference>
<sequence length="223" mass="24772">MDTAVVYADLHLARTGEPKREPPPSLSPDTCQCPRWHRLALKLGCACLILLVLSVIGLGVLVLTLLQKPLIQNSPADVQENRTKTTDSPAKLKCPKDWHSHQDKCFHVSQTSITWKGSLADCGGKGATLLLVQDQEELRFLRNLTKRISSSFWIGLSYTLSDEKWKWINGSTLNSDALNITGDTEKDSCASVSQDKVLSESCDSDNIWICQKELKRESTCNDS</sequence>
<keyword id="KW-0002">3D-structure</keyword>
<keyword id="KW-1015">Disulfide bond</keyword>
<keyword id="KW-0430">Lectin</keyword>
<keyword id="KW-0472">Membrane</keyword>
<keyword id="KW-0675">Receptor</keyword>
<keyword id="KW-1185">Reference proteome</keyword>
<keyword id="KW-0735">Signal-anchor</keyword>
<keyword id="KW-0812">Transmembrane</keyword>
<keyword id="KW-1133">Transmembrane helix</keyword>
<evidence type="ECO:0000250" key="1">
    <source>
        <dbReference type="UniProtKB" id="P27812"/>
    </source>
</evidence>
<evidence type="ECO:0000255" key="2"/>
<evidence type="ECO:0000255" key="3">
    <source>
        <dbReference type="PROSITE-ProRule" id="PRU00040"/>
    </source>
</evidence>
<evidence type="ECO:0000269" key="4">
    <source>
    </source>
</evidence>
<evidence type="ECO:0000269" key="5">
    <source>
    </source>
</evidence>
<evidence type="ECO:0000305" key="6"/>
<evidence type="ECO:0000312" key="7">
    <source>
        <dbReference type="EMBL" id="AAB01986.1"/>
    </source>
</evidence>
<evidence type="ECO:0000312" key="8">
    <source>
        <dbReference type="EMBL" id="ABO15822.1"/>
    </source>
</evidence>
<evidence type="ECO:0000312" key="9">
    <source>
        <dbReference type="EMBL" id="ABO15824.1"/>
    </source>
</evidence>
<evidence type="ECO:0000312" key="10">
    <source>
        <dbReference type="RGD" id="2975"/>
    </source>
</evidence>
<evidence type="ECO:0007829" key="11">
    <source>
        <dbReference type="PDB" id="5J2S"/>
    </source>
</evidence>
<evidence type="ECO:0007829" key="12">
    <source>
        <dbReference type="PDB" id="7ODU"/>
    </source>
</evidence>
<reference evidence="6 8" key="1">
    <citation type="journal article" date="2007" name="Immunity">
        <title>Cytomegalovirus evasion of innate immunity by subversion of the NKR-P1B:Ocil/Clr-b missing-self axis.</title>
        <authorList>
            <person name="Voigt S."/>
            <person name="Mesci A."/>
            <person name="Ettinger J."/>
            <person name="Fine J.H."/>
            <person name="Chen P."/>
            <person name="Chou W."/>
            <person name="Carlyle J.R."/>
        </authorList>
    </citation>
    <scope>NUCLEOTIDE SEQUENCE [MRNA]</scope>
    <scope>FUNCTION</scope>
    <scope>POLYMORPHISM</scope>
    <source>
        <strain evidence="8">Fischer 344</strain>
        <strain evidence="9">Sprague-Dawley</strain>
        <tissue>Natural killer cell</tissue>
    </source>
</reference>
<reference evidence="6 7" key="2">
    <citation type="submission" date="1996-04" db="EMBL/GenBank/DDBJ databases">
        <authorList>
            <person name="Ryan J.C."/>
            <person name="Dissen E."/>
            <person name="Seaman W.E."/>
            <person name="Fossum S."/>
        </authorList>
    </citation>
    <scope>NUCLEOTIDE SEQUENCE [MRNA]</scope>
    <source>
        <strain evidence="7">Fischer 344</strain>
        <tissue>Natural killer cell</tissue>
    </source>
</reference>
<reference evidence="6" key="3">
    <citation type="journal article" date="2006" name="J. Immunol.">
        <title>The novel inhibitory NKR-P1C receptor and Ly49s3 identify two complementary, functionally distinct NK cell subsets in rats.</title>
        <authorList>
            <person name="Kveberg L."/>
            <person name="Baeck C.J."/>
            <person name="Dai K.-Z."/>
            <person name="Inngjerdingen M."/>
            <person name="Rolstad B."/>
            <person name="Ryan J.C."/>
            <person name="Vaage J.T."/>
            <person name="Naper C."/>
        </authorList>
    </citation>
    <scope>FUNCTION</scope>
    <scope>SUBUNIT</scope>
    <scope>TISSUE SPECIFICITY</scope>
</reference>
<name>KRBBA_RAT</name>
<protein>
    <recommendedName>
        <fullName>Killer cell lectin-like receptor subfamily B member 1B allele A</fullName>
    </recommendedName>
    <alternativeName>
        <fullName>CD161 antigen-like family member B</fullName>
    </alternativeName>
    <alternativeName>
        <fullName>Natural killer cell surface protein NKR-P1B allele RNK/SD/BN/F344</fullName>
    </alternativeName>
    <cdAntigenName>CD161b</cdAntigenName>
</protein>